<accession>Q8U403</accession>
<comment type="function">
    <text evidence="1">Converts cobyric acid to cobinamide by the addition of aminopropanol on the F carboxylic group.</text>
</comment>
<comment type="pathway">
    <text evidence="1">Cofactor biosynthesis; adenosylcobalamin biosynthesis.</text>
</comment>
<comment type="subcellular location">
    <subcellularLocation>
        <location evidence="1">Cell membrane</location>
        <topology evidence="1">Multi-pass membrane protein</topology>
    </subcellularLocation>
</comment>
<comment type="similarity">
    <text evidence="1">Belongs to the CobD/CbiB family.</text>
</comment>
<keyword id="KW-1003">Cell membrane</keyword>
<keyword id="KW-0169">Cobalamin biosynthesis</keyword>
<keyword id="KW-0472">Membrane</keyword>
<keyword id="KW-1185">Reference proteome</keyword>
<keyword id="KW-0812">Transmembrane</keyword>
<keyword id="KW-1133">Transmembrane helix</keyword>
<dbReference type="EMBL" id="AE009950">
    <property type="protein sequence ID" value="AAL80420.1"/>
    <property type="molecule type" value="Genomic_DNA"/>
</dbReference>
<dbReference type="STRING" id="186497.PF0296"/>
<dbReference type="PaxDb" id="186497-PF0296"/>
<dbReference type="KEGG" id="pfu:PF0296"/>
<dbReference type="PATRIC" id="fig|186497.12.peg.308"/>
<dbReference type="eggNOG" id="arCOG04274">
    <property type="taxonomic scope" value="Archaea"/>
</dbReference>
<dbReference type="HOGENOM" id="CLU_054212_0_2_2"/>
<dbReference type="OrthoDB" id="46105at2157"/>
<dbReference type="PhylomeDB" id="Q8U403"/>
<dbReference type="UniPathway" id="UPA00148"/>
<dbReference type="Proteomes" id="UP000001013">
    <property type="component" value="Chromosome"/>
</dbReference>
<dbReference type="GO" id="GO:0005886">
    <property type="term" value="C:plasma membrane"/>
    <property type="evidence" value="ECO:0007669"/>
    <property type="project" value="UniProtKB-SubCell"/>
</dbReference>
<dbReference type="GO" id="GO:0015420">
    <property type="term" value="F:ABC-type vitamin B12 transporter activity"/>
    <property type="evidence" value="ECO:0007669"/>
    <property type="project" value="UniProtKB-UniRule"/>
</dbReference>
<dbReference type="GO" id="GO:0048472">
    <property type="term" value="F:threonine-phosphate decarboxylase activity"/>
    <property type="evidence" value="ECO:0007669"/>
    <property type="project" value="InterPro"/>
</dbReference>
<dbReference type="GO" id="GO:0009236">
    <property type="term" value="P:cobalamin biosynthetic process"/>
    <property type="evidence" value="ECO:0007669"/>
    <property type="project" value="UniProtKB-UniRule"/>
</dbReference>
<dbReference type="HAMAP" id="MF_00024">
    <property type="entry name" value="CobD_CbiB"/>
    <property type="match status" value="1"/>
</dbReference>
<dbReference type="InterPro" id="IPR004485">
    <property type="entry name" value="Cobalamin_biosynth_CobD/CbiB"/>
</dbReference>
<dbReference type="NCBIfam" id="TIGR00380">
    <property type="entry name" value="cobal_cbiB"/>
    <property type="match status" value="1"/>
</dbReference>
<dbReference type="PANTHER" id="PTHR34308">
    <property type="entry name" value="COBALAMIN BIOSYNTHESIS PROTEIN CBIB"/>
    <property type="match status" value="1"/>
</dbReference>
<dbReference type="PANTHER" id="PTHR34308:SF1">
    <property type="entry name" value="COBALAMIN BIOSYNTHESIS PROTEIN CBIB"/>
    <property type="match status" value="1"/>
</dbReference>
<dbReference type="Pfam" id="PF03186">
    <property type="entry name" value="CobD_Cbib"/>
    <property type="match status" value="1"/>
</dbReference>
<organism>
    <name type="scientific">Pyrococcus furiosus (strain ATCC 43587 / DSM 3638 / JCM 8422 / Vc1)</name>
    <dbReference type="NCBI Taxonomy" id="186497"/>
    <lineage>
        <taxon>Archaea</taxon>
        <taxon>Methanobacteriati</taxon>
        <taxon>Methanobacteriota</taxon>
        <taxon>Thermococci</taxon>
        <taxon>Thermococcales</taxon>
        <taxon>Thermococcaceae</taxon>
        <taxon>Pyrococcus</taxon>
    </lineage>
</organism>
<gene>
    <name evidence="1" type="primary">cobD</name>
    <name type="ordered locus">PF0296</name>
</gene>
<name>COBD_PYRFU</name>
<sequence length="285" mass="32452">MDMTLPIALLIDLMFGEPPAIIHPVVGFGKVIEFFDNKYRRRSPYLDFLVGAISSLVVIGLAFILSHLPNFLPNPFNLILSIYLLKSSFAIRSLHDHVKRTITPDLEEKRRAVSMIVSRDTKSLDEPHLNSAAIESLSENINDSVIAPLFYYLIFGLPGAVVYRAVNTLDAMIGYRNEKYEYFGKFAARLDDLLNFVPARITVLLFLSLGGRKVIRYYRMAKYKINSDKPIAAMSAVLGVWLEKPNYYKFPGRRPENEDIKRALKVYWIIVVEFLLIVAIILYGG</sequence>
<proteinExistence type="inferred from homology"/>
<protein>
    <recommendedName>
        <fullName evidence="1">Probable cobalamin biosynthesis protein CobD</fullName>
    </recommendedName>
</protein>
<feature type="chain" id="PRO_0000150944" description="Probable cobalamin biosynthesis protein CobD">
    <location>
        <begin position="1"/>
        <end position="285"/>
    </location>
</feature>
<feature type="transmembrane region" description="Helical" evidence="1">
    <location>
        <begin position="10"/>
        <end position="32"/>
    </location>
</feature>
<feature type="transmembrane region" description="Helical" evidence="1">
    <location>
        <begin position="45"/>
        <end position="67"/>
    </location>
</feature>
<feature type="transmembrane region" description="Helical" evidence="1">
    <location>
        <begin position="145"/>
        <end position="167"/>
    </location>
</feature>
<feature type="transmembrane region" description="Helical" evidence="1">
    <location>
        <begin position="266"/>
        <end position="283"/>
    </location>
</feature>
<evidence type="ECO:0000255" key="1">
    <source>
        <dbReference type="HAMAP-Rule" id="MF_00024"/>
    </source>
</evidence>
<reference key="1">
    <citation type="journal article" date="1999" name="Genetics">
        <title>Divergence of the hyperthermophilic archaea Pyrococcus furiosus and P. horikoshii inferred from complete genomic sequences.</title>
        <authorList>
            <person name="Maeder D.L."/>
            <person name="Weiss R.B."/>
            <person name="Dunn D.M."/>
            <person name="Cherry J.L."/>
            <person name="Gonzalez J.M."/>
            <person name="DiRuggiero J."/>
            <person name="Robb F.T."/>
        </authorList>
    </citation>
    <scope>NUCLEOTIDE SEQUENCE [LARGE SCALE GENOMIC DNA]</scope>
    <source>
        <strain>ATCC 43587 / DSM 3638 / JCM 8422 / Vc1</strain>
    </source>
</reference>